<dbReference type="EC" id="4.2.1.59" evidence="1"/>
<dbReference type="EC" id="5.3.3.14" evidence="1"/>
<dbReference type="EMBL" id="AM286415">
    <property type="protein sequence ID" value="CAL11655.1"/>
    <property type="molecule type" value="Genomic_DNA"/>
</dbReference>
<dbReference type="RefSeq" id="WP_005160035.1">
    <property type="nucleotide sequence ID" value="NC_008800.1"/>
</dbReference>
<dbReference type="RefSeq" id="YP_001005871.1">
    <property type="nucleotide sequence ID" value="NC_008800.1"/>
</dbReference>
<dbReference type="SMR" id="A1JMS5"/>
<dbReference type="GeneID" id="93969320"/>
<dbReference type="KEGG" id="yen:YE1578"/>
<dbReference type="PATRIC" id="fig|393305.7.peg.1707"/>
<dbReference type="eggNOG" id="COG0764">
    <property type="taxonomic scope" value="Bacteria"/>
</dbReference>
<dbReference type="HOGENOM" id="CLU_097925_0_0_6"/>
<dbReference type="OrthoDB" id="9786735at2"/>
<dbReference type="UniPathway" id="UPA00094"/>
<dbReference type="Proteomes" id="UP000000642">
    <property type="component" value="Chromosome"/>
</dbReference>
<dbReference type="GO" id="GO:0005737">
    <property type="term" value="C:cytoplasm"/>
    <property type="evidence" value="ECO:0007669"/>
    <property type="project" value="UniProtKB-SubCell"/>
</dbReference>
<dbReference type="GO" id="GO:0019171">
    <property type="term" value="F:(3R)-hydroxyacyl-[acyl-carrier-protein] dehydratase activity"/>
    <property type="evidence" value="ECO:0007669"/>
    <property type="project" value="UniProtKB-UniRule"/>
</dbReference>
<dbReference type="GO" id="GO:0034017">
    <property type="term" value="F:trans-2-decenoyl-acyl-carrier-protein isomerase activity"/>
    <property type="evidence" value="ECO:0007669"/>
    <property type="project" value="UniProtKB-UniRule"/>
</dbReference>
<dbReference type="GO" id="GO:0006636">
    <property type="term" value="P:unsaturated fatty acid biosynthetic process"/>
    <property type="evidence" value="ECO:0007669"/>
    <property type="project" value="UniProtKB-UniRule"/>
</dbReference>
<dbReference type="CDD" id="cd01287">
    <property type="entry name" value="FabA"/>
    <property type="match status" value="1"/>
</dbReference>
<dbReference type="FunFam" id="3.10.129.10:FF:000003">
    <property type="entry name" value="3-hydroxydecanoyl-[acyl-carrier-protein] dehydratase"/>
    <property type="match status" value="1"/>
</dbReference>
<dbReference type="Gene3D" id="3.10.129.10">
    <property type="entry name" value="Hotdog Thioesterase"/>
    <property type="match status" value="1"/>
</dbReference>
<dbReference type="HAMAP" id="MF_00405">
    <property type="entry name" value="FabA"/>
    <property type="match status" value="1"/>
</dbReference>
<dbReference type="InterPro" id="IPR010083">
    <property type="entry name" value="FabA"/>
</dbReference>
<dbReference type="InterPro" id="IPR013114">
    <property type="entry name" value="FabA_FabZ"/>
</dbReference>
<dbReference type="InterPro" id="IPR029069">
    <property type="entry name" value="HotDog_dom_sf"/>
</dbReference>
<dbReference type="NCBIfam" id="TIGR01749">
    <property type="entry name" value="fabA"/>
    <property type="match status" value="1"/>
</dbReference>
<dbReference type="NCBIfam" id="NF003509">
    <property type="entry name" value="PRK05174.1"/>
    <property type="match status" value="1"/>
</dbReference>
<dbReference type="PANTHER" id="PTHR30272">
    <property type="entry name" value="3-HYDROXYACYL-[ACYL-CARRIER-PROTEIN] DEHYDRATASE"/>
    <property type="match status" value="1"/>
</dbReference>
<dbReference type="PANTHER" id="PTHR30272:SF8">
    <property type="entry name" value="3-HYDROXYDECANOYL-[ACYL-CARRIER-PROTEIN] DEHYDRATASE"/>
    <property type="match status" value="1"/>
</dbReference>
<dbReference type="Pfam" id="PF07977">
    <property type="entry name" value="FabA"/>
    <property type="match status" value="1"/>
</dbReference>
<dbReference type="SUPFAM" id="SSF54637">
    <property type="entry name" value="Thioesterase/thiol ester dehydrase-isomerase"/>
    <property type="match status" value="1"/>
</dbReference>
<gene>
    <name evidence="1" type="primary">fabA</name>
    <name type="ordered locus">YE1578</name>
</gene>
<feature type="chain" id="PRO_0000301876" description="3-hydroxydecanoyl-[acyl-carrier-protein] dehydratase">
    <location>
        <begin position="1"/>
        <end position="172"/>
    </location>
</feature>
<feature type="active site" evidence="1">
    <location>
        <position position="71"/>
    </location>
</feature>
<name>FABA_YERE8</name>
<proteinExistence type="inferred from homology"/>
<comment type="function">
    <text evidence="1">Necessary for the introduction of cis unsaturation into fatty acids. Catalyzes the dehydration of (3R)-3-hydroxydecanoyl-ACP to E-(2)-decenoyl-ACP and then its isomerization to Z-(3)-decenoyl-ACP. Can catalyze the dehydratase reaction for beta-hydroxyacyl-ACPs with saturated chain lengths up to 16:0, being most active on intermediate chain length.</text>
</comment>
<comment type="catalytic activity">
    <reaction evidence="1">
        <text>a (3R)-hydroxyacyl-[ACP] = a (2E)-enoyl-[ACP] + H2O</text>
        <dbReference type="Rhea" id="RHEA:13097"/>
        <dbReference type="Rhea" id="RHEA-COMP:9925"/>
        <dbReference type="Rhea" id="RHEA-COMP:9945"/>
        <dbReference type="ChEBI" id="CHEBI:15377"/>
        <dbReference type="ChEBI" id="CHEBI:78784"/>
        <dbReference type="ChEBI" id="CHEBI:78827"/>
        <dbReference type="EC" id="4.2.1.59"/>
    </reaction>
</comment>
<comment type="catalytic activity">
    <reaction evidence="1">
        <text>(3R)-hydroxydecanoyl-[ACP] = (2E)-decenoyl-[ACP] + H2O</text>
        <dbReference type="Rhea" id="RHEA:41860"/>
        <dbReference type="Rhea" id="RHEA-COMP:9638"/>
        <dbReference type="Rhea" id="RHEA-COMP:9639"/>
        <dbReference type="ChEBI" id="CHEBI:15377"/>
        <dbReference type="ChEBI" id="CHEBI:78466"/>
        <dbReference type="ChEBI" id="CHEBI:78467"/>
    </reaction>
</comment>
<comment type="catalytic activity">
    <reaction evidence="1">
        <text>(2E)-decenoyl-[ACP] = (3Z)-decenoyl-[ACP]</text>
        <dbReference type="Rhea" id="RHEA:23568"/>
        <dbReference type="Rhea" id="RHEA-COMP:9639"/>
        <dbReference type="Rhea" id="RHEA-COMP:9927"/>
        <dbReference type="ChEBI" id="CHEBI:78467"/>
        <dbReference type="ChEBI" id="CHEBI:78798"/>
        <dbReference type="EC" id="5.3.3.14"/>
    </reaction>
</comment>
<comment type="pathway">
    <text evidence="1">Lipid metabolism; fatty acid biosynthesis.</text>
</comment>
<comment type="subunit">
    <text evidence="1">Homodimer.</text>
</comment>
<comment type="subcellular location">
    <subcellularLocation>
        <location evidence="1">Cytoplasm</location>
    </subcellularLocation>
</comment>
<comment type="similarity">
    <text evidence="1">Belongs to the thioester dehydratase family. FabA subfamily.</text>
</comment>
<organism>
    <name type="scientific">Yersinia enterocolitica serotype O:8 / biotype 1B (strain NCTC 13174 / 8081)</name>
    <dbReference type="NCBI Taxonomy" id="393305"/>
    <lineage>
        <taxon>Bacteria</taxon>
        <taxon>Pseudomonadati</taxon>
        <taxon>Pseudomonadota</taxon>
        <taxon>Gammaproteobacteria</taxon>
        <taxon>Enterobacterales</taxon>
        <taxon>Yersiniaceae</taxon>
        <taxon>Yersinia</taxon>
    </lineage>
</organism>
<sequence>MVDKRESYTKEDLEASGRGELFGAGGPPLPAGNMLMMDRVVKMTEDGGTYGKGYVEAELDINPDLWFFGCHFIGDPVMPGCLGLDAMWQLVGFYLGWLGGEGKGRALGVGEVKFTGQVLPDAKKVTYRINFKRIIMRKLIMGVADGEVLVDGKVIYTATDLKVGLFKDTNAF</sequence>
<evidence type="ECO:0000255" key="1">
    <source>
        <dbReference type="HAMAP-Rule" id="MF_00405"/>
    </source>
</evidence>
<keyword id="KW-0963">Cytoplasm</keyword>
<keyword id="KW-0275">Fatty acid biosynthesis</keyword>
<keyword id="KW-0276">Fatty acid metabolism</keyword>
<keyword id="KW-0413">Isomerase</keyword>
<keyword id="KW-0444">Lipid biosynthesis</keyword>
<keyword id="KW-0443">Lipid metabolism</keyword>
<keyword id="KW-0456">Lyase</keyword>
<reference key="1">
    <citation type="journal article" date="2006" name="PLoS Genet.">
        <title>The complete genome sequence and comparative genome analysis of the high pathogenicity Yersinia enterocolitica strain 8081.</title>
        <authorList>
            <person name="Thomson N.R."/>
            <person name="Howard S."/>
            <person name="Wren B.W."/>
            <person name="Holden M.T.G."/>
            <person name="Crossman L."/>
            <person name="Challis G.L."/>
            <person name="Churcher C."/>
            <person name="Mungall K."/>
            <person name="Brooks K."/>
            <person name="Chillingworth T."/>
            <person name="Feltwell T."/>
            <person name="Abdellah Z."/>
            <person name="Hauser H."/>
            <person name="Jagels K."/>
            <person name="Maddison M."/>
            <person name="Moule S."/>
            <person name="Sanders M."/>
            <person name="Whitehead S."/>
            <person name="Quail M.A."/>
            <person name="Dougan G."/>
            <person name="Parkhill J."/>
            <person name="Prentice M.B."/>
        </authorList>
    </citation>
    <scope>NUCLEOTIDE SEQUENCE [LARGE SCALE GENOMIC DNA]</scope>
    <source>
        <strain>NCTC 13174 / 8081</strain>
    </source>
</reference>
<accession>A1JMS5</accession>
<protein>
    <recommendedName>
        <fullName evidence="1">3-hydroxydecanoyl-[acyl-carrier-protein] dehydratase</fullName>
        <ecNumber evidence="1">4.2.1.59</ecNumber>
    </recommendedName>
    <alternativeName>
        <fullName evidence="1">3-hydroxyacyl-[acyl-carrier-protein] dehydratase FabA</fullName>
    </alternativeName>
    <alternativeName>
        <fullName evidence="1">Beta-hydroxydecanoyl thioester dehydrase</fullName>
    </alternativeName>
    <alternativeName>
        <fullName evidence="1">Trans-2-decenoyl-[acyl-carrier-protein] isomerase</fullName>
        <ecNumber evidence="1">5.3.3.14</ecNumber>
    </alternativeName>
</protein>